<gene>
    <name type="primary">rapgap1</name>
    <name type="ORF">DDB_G0271734</name>
</gene>
<comment type="function">
    <text evidence="3">Mediates the deactivation of rap1 and plays an important role in spatially and temporally regulating cell adhesion and chemotaxis by controlling attachment disassembly in the leading edge through the regulation of myosin II assembly and disassembly. Overexpression leads to defective chemotaxis.</text>
</comment>
<comment type="subcellular location">
    <subcellularLocation>
        <location evidence="3">Cytoplasm</location>
    </subcellularLocation>
    <subcellularLocation>
        <location evidence="3">Cytoplasm</location>
        <location evidence="3">Cell cortex</location>
    </subcellularLocation>
    <text>Translocates to the cell cortex in response to chemoattractant stimulation and localizes to the leading edge of chemotaxing cells via an F-actin-dependent pathway. Cortical localization is negatively regulated by ctx.</text>
</comment>
<comment type="developmental stage">
    <text evidence="3">Expressed at all stages of development.</text>
</comment>
<comment type="disruption phenotype">
    <text evidence="3">Null cells show defects in spatial regulation of the cell attachment at the leading edge. They also have extended chemoattractant-mediated rap1 activation kinetics and decreased myosin II assembly.</text>
</comment>
<sequence>MSIYHGIIGSSDHIQNIFPPPSPRKNISLSTNNISSLTTPKNFTAIVVTKPLSQSTTSTQEMMNTSDILFDIQQPLSPQHHSRQIQQQQHEKITPEEEERRSDELQKILLDTIPILIKGVETLGIEVEQICNGDSANEKRSNCQVLVDIQKTLREYPRGMGYRSKTIPSNIVGKPKLIAFRHSMDQLVWENISKLSILKDFVEFTLDFQKLCVIGISIRDAINSFVNNKCEYLIKGFEFNNTNSILSGINIHHHLNHQPGASTPRPSHSSSSSLSHSLSSSPMSQSLPSSLTSGGVSLLNTSDDAIVPSLSSGNDDSSGSSLSSSDANVISINISTVIQNGVRDEINNTSISALKKSQKQQPVVLSRAPKQVMESTRILVDTVVNRKCMYREEKASIYREMMNDRLTLLKEDPKKFKQQLLQQRRQKLTNSDQPHETDYNEDFNLNNNSTNNNNNIKKESNGSSVNSQTTTTTTTTNNNNNNISPQHSGTSGSPSDKENSPIFSPGYLSTSPPKSPPKSPEFLGVPIGKKAHLLGHARSFSADTHATKEAAANQHHHSHNNIGSVLSPPLSSQNERILRNYKLLSSSPSSSSSAVVTNPVSLTTQLQQQQQQQQQQQTTSQPTQPPPSEYQLLDLEWEEPIDSDFILPCKGYKIDSGNSKCQQVNYDELIVLYTDEDEYHYCDDFCSLEHFNFLGVNKNQPDNPMCISVVVQHDTNELLYIIRTGEKDEKYRLSLPYGKKEISSKDMLKMIKKSRFNQMSNFKLKEVKSDQNQQFIKQLIQFEAKNIHKTFKFGVLYCSENQGTDENELYSNSSTSDEFQEFLRILGDRVQLQGWTKYRGGLDIKDNTTGTHSIYKKWRDFEIMYHVAPMIPCRAADEQSVERKRHLGNDIVLIIYKEGNTKLFDPSIIKSNFNHIFAVVQKVDPIPNVDGAAVINLGNSFNNNNSSNNNNNNNNNNNNNNNSDSNLPTTNNLPIITNVNYKISIGCKEEVQNFGPAFPKNHIFSTSTGENLTDFLLTRLINGERATLKSPVFAQKLKRTRKEFLHSFITDFGSE</sequence>
<name>RGAP1_DICDI</name>
<evidence type="ECO:0000255" key="1">
    <source>
        <dbReference type="PROSITE-ProRule" id="PRU00165"/>
    </source>
</evidence>
<evidence type="ECO:0000256" key="2">
    <source>
        <dbReference type="SAM" id="MobiDB-lite"/>
    </source>
</evidence>
<evidence type="ECO:0000269" key="3">
    <source>
    </source>
</evidence>
<dbReference type="EMBL" id="AAFI02000006">
    <property type="protein sequence ID" value="EAL71557.1"/>
    <property type="molecule type" value="Genomic_DNA"/>
</dbReference>
<dbReference type="RefSeq" id="XP_645524.1">
    <property type="nucleotide sequence ID" value="XM_640432.1"/>
</dbReference>
<dbReference type="SMR" id="Q75J96"/>
<dbReference type="FunCoup" id="Q75J96">
    <property type="interactions" value="528"/>
</dbReference>
<dbReference type="STRING" id="44689.Q75J96"/>
<dbReference type="PaxDb" id="44689-DDB0233726"/>
<dbReference type="EnsemblProtists" id="EAL71557">
    <property type="protein sequence ID" value="EAL71557"/>
    <property type="gene ID" value="DDB_G0271734"/>
</dbReference>
<dbReference type="GeneID" id="8618153"/>
<dbReference type="KEGG" id="ddi:DDB_G0271734"/>
<dbReference type="dictyBase" id="DDB_G0271734">
    <property type="gene designation" value="rapgap1"/>
</dbReference>
<dbReference type="VEuPathDB" id="AmoebaDB:DDB_G0271734"/>
<dbReference type="eggNOG" id="KOG3686">
    <property type="taxonomic scope" value="Eukaryota"/>
</dbReference>
<dbReference type="HOGENOM" id="CLU_290263_0_0_1"/>
<dbReference type="InParanoid" id="Q75J96"/>
<dbReference type="OMA" id="VAPMIPC"/>
<dbReference type="Reactome" id="R-DDI-392517">
    <property type="pathway name" value="Rap1 signalling"/>
</dbReference>
<dbReference type="PRO" id="PR:Q75J96"/>
<dbReference type="Proteomes" id="UP000002195">
    <property type="component" value="Chromosome 2"/>
</dbReference>
<dbReference type="GO" id="GO:0005938">
    <property type="term" value="C:cell cortex"/>
    <property type="evidence" value="ECO:0000314"/>
    <property type="project" value="dictyBase"/>
</dbReference>
<dbReference type="GO" id="GO:0031252">
    <property type="term" value="C:cell leading edge"/>
    <property type="evidence" value="ECO:0000314"/>
    <property type="project" value="dictyBase"/>
</dbReference>
<dbReference type="GO" id="GO:0005737">
    <property type="term" value="C:cytoplasm"/>
    <property type="evidence" value="ECO:0000314"/>
    <property type="project" value="dictyBase"/>
</dbReference>
<dbReference type="GO" id="GO:0005096">
    <property type="term" value="F:GTPase activator activity"/>
    <property type="evidence" value="ECO:0000318"/>
    <property type="project" value="GO_Central"/>
</dbReference>
<dbReference type="GO" id="GO:0030695">
    <property type="term" value="F:GTPase regulator activity"/>
    <property type="evidence" value="ECO:0000314"/>
    <property type="project" value="dictyBase"/>
</dbReference>
<dbReference type="GO" id="GO:0031589">
    <property type="term" value="P:cell-substrate adhesion"/>
    <property type="evidence" value="ECO:0000315"/>
    <property type="project" value="dictyBase"/>
</dbReference>
<dbReference type="GO" id="GO:0007163">
    <property type="term" value="P:establishment or maintenance of cell polarity"/>
    <property type="evidence" value="ECO:0000315"/>
    <property type="project" value="dictyBase"/>
</dbReference>
<dbReference type="GO" id="GO:0030837">
    <property type="term" value="P:negative regulation of actin filament polymerization"/>
    <property type="evidence" value="ECO:0000270"/>
    <property type="project" value="dictyBase"/>
</dbReference>
<dbReference type="GO" id="GO:0043520">
    <property type="term" value="P:regulation of myosin II filament assembly"/>
    <property type="evidence" value="ECO:0000315"/>
    <property type="project" value="dictyBase"/>
</dbReference>
<dbReference type="GO" id="GO:0051056">
    <property type="term" value="P:regulation of small GTPase mediated signal transduction"/>
    <property type="evidence" value="ECO:0007669"/>
    <property type="project" value="InterPro"/>
</dbReference>
<dbReference type="GO" id="GO:0051591">
    <property type="term" value="P:response to cAMP"/>
    <property type="evidence" value="ECO:0000314"/>
    <property type="project" value="dictyBase"/>
</dbReference>
<dbReference type="Gene3D" id="3.40.50.11210">
    <property type="entry name" value="Rap/Ran-GAP"/>
    <property type="match status" value="1"/>
</dbReference>
<dbReference type="InterPro" id="IPR035974">
    <property type="entry name" value="Rap/Ran-GAP_sf"/>
</dbReference>
<dbReference type="InterPro" id="IPR000331">
    <property type="entry name" value="Rap/Ran_GAP_dom"/>
</dbReference>
<dbReference type="InterPro" id="IPR050989">
    <property type="entry name" value="Rap1_Ran_GAP"/>
</dbReference>
<dbReference type="PANTHER" id="PTHR15711">
    <property type="entry name" value="RAP GTPASE-ACTIVATING PROTEIN"/>
    <property type="match status" value="1"/>
</dbReference>
<dbReference type="PANTHER" id="PTHR15711:SF61">
    <property type="entry name" value="RAPA GUANOSINE TRIPHOSPHATASE-ACTIVATING PROTEIN 1"/>
    <property type="match status" value="1"/>
</dbReference>
<dbReference type="Pfam" id="PF02145">
    <property type="entry name" value="Rap_GAP"/>
    <property type="match status" value="1"/>
</dbReference>
<dbReference type="SUPFAM" id="SSF111347">
    <property type="entry name" value="Rap/Ran-GAP"/>
    <property type="match status" value="1"/>
</dbReference>
<dbReference type="PROSITE" id="PS50085">
    <property type="entry name" value="RAPGAP"/>
    <property type="match status" value="1"/>
</dbReference>
<accession>Q75J96</accession>
<accession>Q55AJ8</accession>
<feature type="chain" id="PRO_0000368229" description="RapA guanosine triphosphatase-activating protein 1">
    <location>
        <begin position="1"/>
        <end position="1055"/>
    </location>
</feature>
<feature type="domain" description="Rap-GAP" evidence="1">
    <location>
        <begin position="779"/>
        <end position="1048"/>
    </location>
</feature>
<feature type="region of interest" description="Disordered" evidence="2">
    <location>
        <begin position="76"/>
        <end position="100"/>
    </location>
</feature>
<feature type="region of interest" description="Disordered" evidence="2">
    <location>
        <begin position="256"/>
        <end position="292"/>
    </location>
</feature>
<feature type="region of interest" description="Disordered" evidence="2">
    <location>
        <begin position="418"/>
        <end position="525"/>
    </location>
</feature>
<feature type="region of interest" description="Disordered" evidence="2">
    <location>
        <begin position="544"/>
        <end position="570"/>
    </location>
</feature>
<feature type="region of interest" description="Disordered" evidence="2">
    <location>
        <begin position="603"/>
        <end position="629"/>
    </location>
</feature>
<feature type="region of interest" description="Disordered" evidence="2">
    <location>
        <begin position="943"/>
        <end position="969"/>
    </location>
</feature>
<feature type="compositionally biased region" description="Basic and acidic residues" evidence="2">
    <location>
        <begin position="89"/>
        <end position="100"/>
    </location>
</feature>
<feature type="compositionally biased region" description="Low complexity" evidence="2">
    <location>
        <begin position="262"/>
        <end position="292"/>
    </location>
</feature>
<feature type="compositionally biased region" description="Low complexity" evidence="2">
    <location>
        <begin position="442"/>
        <end position="455"/>
    </location>
</feature>
<feature type="compositionally biased region" description="Low complexity" evidence="2">
    <location>
        <begin position="469"/>
        <end position="482"/>
    </location>
</feature>
<feature type="compositionally biased region" description="Polar residues" evidence="2">
    <location>
        <begin position="483"/>
        <end position="494"/>
    </location>
</feature>
<feature type="compositionally biased region" description="Low complexity" evidence="2">
    <location>
        <begin position="603"/>
        <end position="622"/>
    </location>
</feature>
<feature type="compositionally biased region" description="Low complexity" evidence="2">
    <location>
        <begin position="943"/>
        <end position="966"/>
    </location>
</feature>
<keyword id="KW-0963">Cytoplasm</keyword>
<keyword id="KW-0343">GTPase activation</keyword>
<keyword id="KW-1185">Reference proteome</keyword>
<protein>
    <recommendedName>
        <fullName>RapA guanosine triphosphatase-activating protein 1</fullName>
    </recommendedName>
</protein>
<organism>
    <name type="scientific">Dictyostelium discoideum</name>
    <name type="common">Social amoeba</name>
    <dbReference type="NCBI Taxonomy" id="44689"/>
    <lineage>
        <taxon>Eukaryota</taxon>
        <taxon>Amoebozoa</taxon>
        <taxon>Evosea</taxon>
        <taxon>Eumycetozoa</taxon>
        <taxon>Dictyostelia</taxon>
        <taxon>Dictyosteliales</taxon>
        <taxon>Dictyosteliaceae</taxon>
        <taxon>Dictyostelium</taxon>
    </lineage>
</organism>
<proteinExistence type="evidence at transcript level"/>
<reference key="1">
    <citation type="journal article" date="2002" name="Nature">
        <title>Sequence and analysis of chromosome 2 of Dictyostelium discoideum.</title>
        <authorList>
            <person name="Gloeckner G."/>
            <person name="Eichinger L."/>
            <person name="Szafranski K."/>
            <person name="Pachebat J.A."/>
            <person name="Bankier A.T."/>
            <person name="Dear P.H."/>
            <person name="Lehmann R."/>
            <person name="Baumgart C."/>
            <person name="Parra G."/>
            <person name="Abril J.F."/>
            <person name="Guigo R."/>
            <person name="Kumpf K."/>
            <person name="Tunggal B."/>
            <person name="Cox E.C."/>
            <person name="Quail M.A."/>
            <person name="Platzer M."/>
            <person name="Rosenthal A."/>
            <person name="Noegel A.A."/>
        </authorList>
    </citation>
    <scope>NUCLEOTIDE SEQUENCE [LARGE SCALE GENOMIC DNA]</scope>
    <source>
        <strain>AX4</strain>
    </source>
</reference>
<reference key="2">
    <citation type="journal article" date="2005" name="Nature">
        <title>The genome of the social amoeba Dictyostelium discoideum.</title>
        <authorList>
            <person name="Eichinger L."/>
            <person name="Pachebat J.A."/>
            <person name="Gloeckner G."/>
            <person name="Rajandream M.A."/>
            <person name="Sucgang R."/>
            <person name="Berriman M."/>
            <person name="Song J."/>
            <person name="Olsen R."/>
            <person name="Szafranski K."/>
            <person name="Xu Q."/>
            <person name="Tunggal B."/>
            <person name="Kummerfeld S."/>
            <person name="Madera M."/>
            <person name="Konfortov B.A."/>
            <person name="Rivero F."/>
            <person name="Bankier A.T."/>
            <person name="Lehmann R."/>
            <person name="Hamlin N."/>
            <person name="Davies R."/>
            <person name="Gaudet P."/>
            <person name="Fey P."/>
            <person name="Pilcher K."/>
            <person name="Chen G."/>
            <person name="Saunders D."/>
            <person name="Sodergren E.J."/>
            <person name="Davis P."/>
            <person name="Kerhornou A."/>
            <person name="Nie X."/>
            <person name="Hall N."/>
            <person name="Anjard C."/>
            <person name="Hemphill L."/>
            <person name="Bason N."/>
            <person name="Farbrother P."/>
            <person name="Desany B."/>
            <person name="Just E."/>
            <person name="Morio T."/>
            <person name="Rost R."/>
            <person name="Churcher C.M."/>
            <person name="Cooper J."/>
            <person name="Haydock S."/>
            <person name="van Driessche N."/>
            <person name="Cronin A."/>
            <person name="Goodhead I."/>
            <person name="Muzny D.M."/>
            <person name="Mourier T."/>
            <person name="Pain A."/>
            <person name="Lu M."/>
            <person name="Harper D."/>
            <person name="Lindsay R."/>
            <person name="Hauser H."/>
            <person name="James K.D."/>
            <person name="Quiles M."/>
            <person name="Madan Babu M."/>
            <person name="Saito T."/>
            <person name="Buchrieser C."/>
            <person name="Wardroper A."/>
            <person name="Felder M."/>
            <person name="Thangavelu M."/>
            <person name="Johnson D."/>
            <person name="Knights A."/>
            <person name="Loulseged H."/>
            <person name="Mungall K.L."/>
            <person name="Oliver K."/>
            <person name="Price C."/>
            <person name="Quail M.A."/>
            <person name="Urushihara H."/>
            <person name="Hernandez J."/>
            <person name="Rabbinowitsch E."/>
            <person name="Steffen D."/>
            <person name="Sanders M."/>
            <person name="Ma J."/>
            <person name="Kohara Y."/>
            <person name="Sharp S."/>
            <person name="Simmonds M.N."/>
            <person name="Spiegler S."/>
            <person name="Tivey A."/>
            <person name="Sugano S."/>
            <person name="White B."/>
            <person name="Walker D."/>
            <person name="Woodward J.R."/>
            <person name="Winckler T."/>
            <person name="Tanaka Y."/>
            <person name="Shaulsky G."/>
            <person name="Schleicher M."/>
            <person name="Weinstock G.M."/>
            <person name="Rosenthal A."/>
            <person name="Cox E.C."/>
            <person name="Chisholm R.L."/>
            <person name="Gibbs R.A."/>
            <person name="Loomis W.F."/>
            <person name="Platzer M."/>
            <person name="Kay R.R."/>
            <person name="Williams J.G."/>
            <person name="Dear P.H."/>
            <person name="Noegel A.A."/>
            <person name="Barrell B.G."/>
            <person name="Kuspa A."/>
        </authorList>
    </citation>
    <scope>NUCLEOTIDE SEQUENCE [LARGE SCALE GENOMIC DNA]</scope>
    <source>
        <strain>AX4</strain>
    </source>
</reference>
<reference key="3">
    <citation type="journal article" date="2007" name="J. Cell Biol.">
        <title>Regulation of Rap1 activity by RapGAP1 controls cell adhesion at the front of chemotaxing cells.</title>
        <authorList>
            <person name="Jeon T.J."/>
            <person name="Lee D.-J."/>
            <person name="Lee S."/>
            <person name="Weeks G."/>
            <person name="Firtel R.A."/>
        </authorList>
    </citation>
    <scope>FUNCTION</scope>
    <scope>DISRUPTION PHENOTYPE</scope>
    <scope>SUBCELLULAR LOCATION</scope>
    <scope>DEVELOPMENTAL STAGE</scope>
</reference>